<proteinExistence type="inferred from homology"/>
<keyword id="KW-0963">Cytoplasm</keyword>
<keyword id="KW-1185">Reference proteome</keyword>
<feature type="chain" id="PRO_0000278701" description="ClpXP adapter protein SpxH">
    <location>
        <begin position="1"/>
        <end position="262"/>
    </location>
</feature>
<name>SPXH_STAS1</name>
<reference key="1">
    <citation type="journal article" date="2005" name="Proc. Natl. Acad. Sci. U.S.A.">
        <title>Whole genome sequence of Staphylococcus saprophyticus reveals the pathogenesis of uncomplicated urinary tract infection.</title>
        <authorList>
            <person name="Kuroda M."/>
            <person name="Yamashita A."/>
            <person name="Hirakawa H."/>
            <person name="Kumano M."/>
            <person name="Morikawa K."/>
            <person name="Higashide M."/>
            <person name="Maruyama A."/>
            <person name="Inose Y."/>
            <person name="Matoba K."/>
            <person name="Toh H."/>
            <person name="Kuhara S."/>
            <person name="Hattori M."/>
            <person name="Ohta T."/>
        </authorList>
    </citation>
    <scope>NUCLEOTIDE SEQUENCE [LARGE SCALE GENOMIC DNA]</scope>
    <source>
        <strain>ATCC 15305 / DSM 20229 / NCIMB 8711 / NCTC 7292 / S-41</strain>
    </source>
</reference>
<dbReference type="EMBL" id="AP008934">
    <property type="protein sequence ID" value="BAE18928.1"/>
    <property type="molecule type" value="Genomic_DNA"/>
</dbReference>
<dbReference type="SMR" id="Q49WD1"/>
<dbReference type="KEGG" id="ssp:SSP1783"/>
<dbReference type="eggNOG" id="COG2761">
    <property type="taxonomic scope" value="Bacteria"/>
</dbReference>
<dbReference type="HOGENOM" id="CLU_069785_0_0_9"/>
<dbReference type="OrthoDB" id="9813770at2"/>
<dbReference type="Proteomes" id="UP000006371">
    <property type="component" value="Chromosome"/>
</dbReference>
<dbReference type="GO" id="GO:0005737">
    <property type="term" value="C:cytoplasm"/>
    <property type="evidence" value="ECO:0007669"/>
    <property type="project" value="UniProtKB-SubCell"/>
</dbReference>
<dbReference type="CDD" id="cd03025">
    <property type="entry name" value="DsbA_FrnE_like"/>
    <property type="match status" value="1"/>
</dbReference>
<dbReference type="Gene3D" id="3.40.30.10">
    <property type="entry name" value="Glutaredoxin"/>
    <property type="match status" value="1"/>
</dbReference>
<dbReference type="HAMAP" id="MF_02245">
    <property type="entry name" value="Adapter_SpxH"/>
    <property type="match status" value="1"/>
</dbReference>
<dbReference type="InterPro" id="IPR046404">
    <property type="entry name" value="Adapter_SpxH"/>
</dbReference>
<dbReference type="InterPro" id="IPR036249">
    <property type="entry name" value="Thioredoxin-like_sf"/>
</dbReference>
<dbReference type="Pfam" id="PF13743">
    <property type="entry name" value="Thioredoxin_5"/>
    <property type="match status" value="1"/>
</dbReference>
<dbReference type="SUPFAM" id="SSF52833">
    <property type="entry name" value="Thioredoxin-like"/>
    <property type="match status" value="1"/>
</dbReference>
<evidence type="ECO:0000255" key="1">
    <source>
        <dbReference type="HAMAP-Rule" id="MF_02245"/>
    </source>
</evidence>
<comment type="function">
    <text evidence="1">Adapter protein required for efficient degradation of Spx by ClpXP under non-stress conditions. Interaction with Spx stabilizes Spx and exposes the C-terminus of Spx for recognition and proteolysis by ClpXP.</text>
</comment>
<comment type="subunit">
    <text evidence="1">Interacts with Spx.</text>
</comment>
<comment type="subcellular location">
    <subcellularLocation>
        <location evidence="1">Cytoplasm</location>
    </subcellularLocation>
</comment>
<comment type="similarity">
    <text evidence="1">Belongs to the SpxH family.</text>
</comment>
<protein>
    <recommendedName>
        <fullName evidence="1">ClpXP adapter protein SpxH</fullName>
    </recommendedName>
</protein>
<organism>
    <name type="scientific">Staphylococcus saprophyticus subsp. saprophyticus (strain ATCC 15305 / DSM 20229 / NCIMB 8711 / NCTC 7292 / S-41)</name>
    <dbReference type="NCBI Taxonomy" id="342451"/>
    <lineage>
        <taxon>Bacteria</taxon>
        <taxon>Bacillati</taxon>
        <taxon>Bacillota</taxon>
        <taxon>Bacilli</taxon>
        <taxon>Bacillales</taxon>
        <taxon>Staphylococcaceae</taxon>
        <taxon>Staphylococcus</taxon>
    </lineage>
</organism>
<gene>
    <name evidence="1" type="primary">spxH</name>
    <name type="ordered locus">SSP1783</name>
</gene>
<accession>Q49WD1</accession>
<sequence length="262" mass="30473">MTEELRLIQPNSREDANLSPVSKIEIYSFFDPFSKECFKLSAILSKLRIEYKQYISIRHILNPSLRVLTKCQAQSTSDLDNIALAYKAAELQGRIRAERFIHLVQNEIIPKRDIITESMVNSCISNAGLDYEVFKEDLNSSCLKESLQVDLHIAREMEIEEAPSLVFFNEDVHEEGLKVEGLYPYHIYTYIINELIGSTIEKELPPSLEDYIQQQQLVTKEELLTIYEWPEKLMNKELKKLALQQKIEKLKSPDGKFWKAKN</sequence>